<accession>A2CBT5</accession>
<dbReference type="EMBL" id="CP000554">
    <property type="protein sequence ID" value="ABM78945.1"/>
    <property type="molecule type" value="Genomic_DNA"/>
</dbReference>
<dbReference type="RefSeq" id="WP_011131030.1">
    <property type="nucleotide sequence ID" value="NC_008820.1"/>
</dbReference>
<dbReference type="SMR" id="A2CBT5"/>
<dbReference type="STRING" id="59922.P9303_22101"/>
<dbReference type="KEGG" id="pmf:P9303_22101"/>
<dbReference type="HOGENOM" id="CLU_215415_0_0_3"/>
<dbReference type="BioCyc" id="PMAR59922:G1G80-1934-MONOMER"/>
<dbReference type="Proteomes" id="UP000002274">
    <property type="component" value="Chromosome"/>
</dbReference>
<dbReference type="GO" id="GO:0009523">
    <property type="term" value="C:photosystem II"/>
    <property type="evidence" value="ECO:0007669"/>
    <property type="project" value="UniProtKB-KW"/>
</dbReference>
<dbReference type="GO" id="GO:0031676">
    <property type="term" value="C:plasma membrane-derived thylakoid membrane"/>
    <property type="evidence" value="ECO:0007669"/>
    <property type="project" value="UniProtKB-SubCell"/>
</dbReference>
<dbReference type="GO" id="GO:0019684">
    <property type="term" value="P:photosynthesis, light reaction"/>
    <property type="evidence" value="ECO:0007669"/>
    <property type="project" value="InterPro"/>
</dbReference>
<dbReference type="HAMAP" id="MF_00438">
    <property type="entry name" value="PSII_PsbM"/>
    <property type="match status" value="1"/>
</dbReference>
<dbReference type="InterPro" id="IPR007826">
    <property type="entry name" value="PSII_PsbM"/>
</dbReference>
<dbReference type="InterPro" id="IPR037269">
    <property type="entry name" value="PSII_PsbM_sf"/>
</dbReference>
<dbReference type="NCBIfam" id="TIGR03038">
    <property type="entry name" value="PS_II_psbM"/>
    <property type="match status" value="1"/>
</dbReference>
<dbReference type="Pfam" id="PF05151">
    <property type="entry name" value="PsbM"/>
    <property type="match status" value="1"/>
</dbReference>
<dbReference type="SUPFAM" id="SSF161033">
    <property type="entry name" value="Photosystem II reaction center protein M, PsbM"/>
    <property type="match status" value="1"/>
</dbReference>
<feature type="chain" id="PRO_1000025956" description="Photosystem II reaction center protein M">
    <location>
        <begin position="1"/>
        <end position="34"/>
    </location>
</feature>
<feature type="transmembrane region" description="Helical" evidence="1">
    <location>
        <begin position="7"/>
        <end position="27"/>
    </location>
</feature>
<keyword id="KW-0472">Membrane</keyword>
<keyword id="KW-0602">Photosynthesis</keyword>
<keyword id="KW-0604">Photosystem II</keyword>
<keyword id="KW-0674">Reaction center</keyword>
<keyword id="KW-0793">Thylakoid</keyword>
<keyword id="KW-0812">Transmembrane</keyword>
<keyword id="KW-1133">Transmembrane helix</keyword>
<reference key="1">
    <citation type="journal article" date="2007" name="PLoS Genet.">
        <title>Patterns and implications of gene gain and loss in the evolution of Prochlorococcus.</title>
        <authorList>
            <person name="Kettler G.C."/>
            <person name="Martiny A.C."/>
            <person name="Huang K."/>
            <person name="Zucker J."/>
            <person name="Coleman M.L."/>
            <person name="Rodrigue S."/>
            <person name="Chen F."/>
            <person name="Lapidus A."/>
            <person name="Ferriera S."/>
            <person name="Johnson J."/>
            <person name="Steglich C."/>
            <person name="Church G.M."/>
            <person name="Richardson P."/>
            <person name="Chisholm S.W."/>
        </authorList>
    </citation>
    <scope>NUCLEOTIDE SEQUENCE [LARGE SCALE GENOMIC DNA]</scope>
    <source>
        <strain>MIT 9303</strain>
    </source>
</reference>
<sequence length="34" mass="3775">MPVNNFGFLATLLFVAVPMLFLIGLYIQTNSNKS</sequence>
<name>PSBM_PROM3</name>
<evidence type="ECO:0000255" key="1">
    <source>
        <dbReference type="HAMAP-Rule" id="MF_00438"/>
    </source>
</evidence>
<evidence type="ECO:0000305" key="2"/>
<comment type="function">
    <text evidence="1">One of the components of the core complex of photosystem II (PSII). PSII is a light-driven water:plastoquinone oxidoreductase that uses light energy to abstract electrons from H(2)O, generating O(2) and a proton gradient subsequently used for ATP formation. It consists of a core antenna complex that captures photons, and an electron transfer chain that converts photonic excitation into a charge separation. This subunit is found at the monomer-monomer interface.</text>
</comment>
<comment type="subunit">
    <text evidence="2">PSII is composed of 1 copy each of membrane proteins PsbA, PsbB, PsbC, PsbD, PsbE, PsbF, PsbH, PsbI, PsbJ, PsbK, PsbL, PsbM, PsbT, PsbX, PsbY, Psb30/Ycf12, peripheral proteins PsbO, CyanoQ (PsbQ), PsbU, PsbV and a large number of cofactors. It forms dimeric complexes.</text>
</comment>
<comment type="subcellular location">
    <subcellularLocation>
        <location evidence="1">Cellular thylakoid membrane</location>
        <topology evidence="1">Single-pass membrane protein</topology>
    </subcellularLocation>
</comment>
<comment type="similarity">
    <text evidence="1">Belongs to the PsbM family.</text>
</comment>
<organism>
    <name type="scientific">Prochlorococcus marinus (strain MIT 9303)</name>
    <dbReference type="NCBI Taxonomy" id="59922"/>
    <lineage>
        <taxon>Bacteria</taxon>
        <taxon>Bacillati</taxon>
        <taxon>Cyanobacteriota</taxon>
        <taxon>Cyanophyceae</taxon>
        <taxon>Synechococcales</taxon>
        <taxon>Prochlorococcaceae</taxon>
        <taxon>Prochlorococcus</taxon>
    </lineage>
</organism>
<protein>
    <recommendedName>
        <fullName evidence="1">Photosystem II reaction center protein M</fullName>
        <shortName evidence="1">PSII-M</shortName>
    </recommendedName>
</protein>
<proteinExistence type="inferred from homology"/>
<gene>
    <name evidence="1" type="primary">psbM</name>
    <name type="ordered locus">P9303_22101</name>
</gene>